<proteinExistence type="inferred from homology"/>
<evidence type="ECO:0000255" key="1">
    <source>
        <dbReference type="HAMAP-Rule" id="MF_00791"/>
    </source>
</evidence>
<sequence>MFTSSKVAIQVQSVYIESQSSPEEQRYVFAYTITIHNLNKHAIRLLRRYWLITNAQGNTTEVQGEGVVGEQPLIEAGSRYRYTSGAVLETPMGTMEGHYEMIDAQGRLFQIDIPVFRLAIPTLIN</sequence>
<protein>
    <recommendedName>
        <fullName evidence="1">Protein ApaG</fullName>
    </recommendedName>
</protein>
<keyword id="KW-1185">Reference proteome</keyword>
<accession>B4F2I3</accession>
<name>APAG_PROMH</name>
<gene>
    <name evidence="1" type="primary">apaG</name>
    <name type="ordered locus">PMI2335</name>
</gene>
<organism>
    <name type="scientific">Proteus mirabilis (strain HI4320)</name>
    <dbReference type="NCBI Taxonomy" id="529507"/>
    <lineage>
        <taxon>Bacteria</taxon>
        <taxon>Pseudomonadati</taxon>
        <taxon>Pseudomonadota</taxon>
        <taxon>Gammaproteobacteria</taxon>
        <taxon>Enterobacterales</taxon>
        <taxon>Morganellaceae</taxon>
        <taxon>Proteus</taxon>
    </lineage>
</organism>
<dbReference type="EMBL" id="AM942759">
    <property type="protein sequence ID" value="CAR44620.1"/>
    <property type="molecule type" value="Genomic_DNA"/>
</dbReference>
<dbReference type="RefSeq" id="WP_004245543.1">
    <property type="nucleotide sequence ID" value="NC_010554.1"/>
</dbReference>
<dbReference type="SMR" id="B4F2I3"/>
<dbReference type="EnsemblBacteria" id="CAR44620">
    <property type="protein sequence ID" value="CAR44620"/>
    <property type="gene ID" value="PMI2335"/>
</dbReference>
<dbReference type="GeneID" id="6803045"/>
<dbReference type="KEGG" id="pmr:PMI2335"/>
<dbReference type="eggNOG" id="COG2967">
    <property type="taxonomic scope" value="Bacteria"/>
</dbReference>
<dbReference type="HOGENOM" id="CLU_128074_0_0_6"/>
<dbReference type="Proteomes" id="UP000008319">
    <property type="component" value="Chromosome"/>
</dbReference>
<dbReference type="Gene3D" id="2.60.40.1470">
    <property type="entry name" value="ApaG domain"/>
    <property type="match status" value="1"/>
</dbReference>
<dbReference type="HAMAP" id="MF_00791">
    <property type="entry name" value="ApaG"/>
    <property type="match status" value="1"/>
</dbReference>
<dbReference type="InterPro" id="IPR050718">
    <property type="entry name" value="ApaG-like"/>
</dbReference>
<dbReference type="InterPro" id="IPR007474">
    <property type="entry name" value="ApaG_domain"/>
</dbReference>
<dbReference type="InterPro" id="IPR036767">
    <property type="entry name" value="ApaG_sf"/>
</dbReference>
<dbReference type="InterPro" id="IPR023065">
    <property type="entry name" value="Uncharacterised_ApaG"/>
</dbReference>
<dbReference type="NCBIfam" id="NF003967">
    <property type="entry name" value="PRK05461.1"/>
    <property type="match status" value="1"/>
</dbReference>
<dbReference type="PANTHER" id="PTHR47191">
    <property type="entry name" value="OS05G0170800 PROTEIN"/>
    <property type="match status" value="1"/>
</dbReference>
<dbReference type="PANTHER" id="PTHR47191:SF2">
    <property type="entry name" value="OS05G0170800 PROTEIN"/>
    <property type="match status" value="1"/>
</dbReference>
<dbReference type="Pfam" id="PF04379">
    <property type="entry name" value="DUF525"/>
    <property type="match status" value="1"/>
</dbReference>
<dbReference type="SUPFAM" id="SSF110069">
    <property type="entry name" value="ApaG-like"/>
    <property type="match status" value="1"/>
</dbReference>
<dbReference type="PROSITE" id="PS51087">
    <property type="entry name" value="APAG"/>
    <property type="match status" value="1"/>
</dbReference>
<reference key="1">
    <citation type="journal article" date="2008" name="J. Bacteriol.">
        <title>Complete genome sequence of uropathogenic Proteus mirabilis, a master of both adherence and motility.</title>
        <authorList>
            <person name="Pearson M.M."/>
            <person name="Sebaihia M."/>
            <person name="Churcher C."/>
            <person name="Quail M.A."/>
            <person name="Seshasayee A.S."/>
            <person name="Luscombe N.M."/>
            <person name="Abdellah Z."/>
            <person name="Arrosmith C."/>
            <person name="Atkin B."/>
            <person name="Chillingworth T."/>
            <person name="Hauser H."/>
            <person name="Jagels K."/>
            <person name="Moule S."/>
            <person name="Mungall K."/>
            <person name="Norbertczak H."/>
            <person name="Rabbinowitsch E."/>
            <person name="Walker D."/>
            <person name="Whithead S."/>
            <person name="Thomson N.R."/>
            <person name="Rather P.N."/>
            <person name="Parkhill J."/>
            <person name="Mobley H.L.T."/>
        </authorList>
    </citation>
    <scope>NUCLEOTIDE SEQUENCE [LARGE SCALE GENOMIC DNA]</scope>
    <source>
        <strain>HI4320</strain>
    </source>
</reference>
<feature type="chain" id="PRO_1000133800" description="Protein ApaG">
    <location>
        <begin position="1"/>
        <end position="125"/>
    </location>
</feature>
<feature type="domain" description="ApaG" evidence="1">
    <location>
        <begin position="1"/>
        <end position="125"/>
    </location>
</feature>